<name>EX7L_TOLAT</name>
<dbReference type="EC" id="3.1.11.6" evidence="1"/>
<dbReference type="EMBL" id="CP001616">
    <property type="protein sequence ID" value="ACQ93772.1"/>
    <property type="molecule type" value="Genomic_DNA"/>
</dbReference>
<dbReference type="RefSeq" id="WP_015879240.1">
    <property type="nucleotide sequence ID" value="NC_012691.1"/>
</dbReference>
<dbReference type="SMR" id="C4L8C6"/>
<dbReference type="STRING" id="595494.Tola_2173"/>
<dbReference type="KEGG" id="tau:Tola_2173"/>
<dbReference type="eggNOG" id="COG1570">
    <property type="taxonomic scope" value="Bacteria"/>
</dbReference>
<dbReference type="HOGENOM" id="CLU_023625_3_1_6"/>
<dbReference type="OrthoDB" id="9802795at2"/>
<dbReference type="Proteomes" id="UP000009073">
    <property type="component" value="Chromosome"/>
</dbReference>
<dbReference type="GO" id="GO:0005737">
    <property type="term" value="C:cytoplasm"/>
    <property type="evidence" value="ECO:0007669"/>
    <property type="project" value="UniProtKB-SubCell"/>
</dbReference>
<dbReference type="GO" id="GO:0009318">
    <property type="term" value="C:exodeoxyribonuclease VII complex"/>
    <property type="evidence" value="ECO:0007669"/>
    <property type="project" value="InterPro"/>
</dbReference>
<dbReference type="GO" id="GO:0008855">
    <property type="term" value="F:exodeoxyribonuclease VII activity"/>
    <property type="evidence" value="ECO:0007669"/>
    <property type="project" value="UniProtKB-UniRule"/>
</dbReference>
<dbReference type="GO" id="GO:0003676">
    <property type="term" value="F:nucleic acid binding"/>
    <property type="evidence" value="ECO:0007669"/>
    <property type="project" value="InterPro"/>
</dbReference>
<dbReference type="GO" id="GO:0006308">
    <property type="term" value="P:DNA catabolic process"/>
    <property type="evidence" value="ECO:0007669"/>
    <property type="project" value="UniProtKB-UniRule"/>
</dbReference>
<dbReference type="CDD" id="cd04489">
    <property type="entry name" value="ExoVII_LU_OBF"/>
    <property type="match status" value="1"/>
</dbReference>
<dbReference type="HAMAP" id="MF_00378">
    <property type="entry name" value="Exonuc_7_L"/>
    <property type="match status" value="1"/>
</dbReference>
<dbReference type="InterPro" id="IPR003753">
    <property type="entry name" value="Exonuc_VII_L"/>
</dbReference>
<dbReference type="InterPro" id="IPR020579">
    <property type="entry name" value="Exonuc_VII_lsu_C"/>
</dbReference>
<dbReference type="InterPro" id="IPR025824">
    <property type="entry name" value="OB-fold_nuc-bd_dom"/>
</dbReference>
<dbReference type="NCBIfam" id="TIGR00237">
    <property type="entry name" value="xseA"/>
    <property type="match status" value="1"/>
</dbReference>
<dbReference type="PANTHER" id="PTHR30008">
    <property type="entry name" value="EXODEOXYRIBONUCLEASE 7 LARGE SUBUNIT"/>
    <property type="match status" value="1"/>
</dbReference>
<dbReference type="PANTHER" id="PTHR30008:SF0">
    <property type="entry name" value="EXODEOXYRIBONUCLEASE 7 LARGE SUBUNIT"/>
    <property type="match status" value="1"/>
</dbReference>
<dbReference type="Pfam" id="PF02601">
    <property type="entry name" value="Exonuc_VII_L"/>
    <property type="match status" value="1"/>
</dbReference>
<dbReference type="Pfam" id="PF13742">
    <property type="entry name" value="tRNA_anti_2"/>
    <property type="match status" value="1"/>
</dbReference>
<accession>C4L8C6</accession>
<proteinExistence type="inferred from homology"/>
<gene>
    <name evidence="1" type="primary">xseA</name>
    <name type="ordered locus">Tola_2173</name>
</gene>
<sequence>MAISQPVIYTVSRLNNVVRLLLEQEMGLVWLTAEISNLVQHSSGHWYFTLKDQQAQIRAAMFKGQNRRVSFRPQNGQQILVQGQLSLYEARGDYQLIVEKMQPAGDGLLQMKLEALKARLMAEGLFDPRRKRALPTQPKQIGIITSPTGAAIHDMLTILARRDPALPVILYPSAVQGESAVPALLNALETAWRRNECDLLIIGRGGGSLEDLWCFNDELVVRAIANSPIPIVSAVGHETDVTLSDFAADLRAPTPSAAAELVSRDQQQQLHRLAQYQHRLQQAIQLRLQQHQIAWQQQYARLNTQNPRYQLQQKIQKQDELQFRLERVMTQTLVQANQQWMSQHQRLQQVSPKRQLPNLQKQHAYLYQRLLNAMQSKQQDSAQTLSRLSGQLHALSPLQVLARGYSVTTNAKGELIHSSQQVTTGEMLNVQLHQGTLKVRTEEVKSEN</sequence>
<protein>
    <recommendedName>
        <fullName evidence="1">Exodeoxyribonuclease 7 large subunit</fullName>
        <ecNumber evidence="1">3.1.11.6</ecNumber>
    </recommendedName>
    <alternativeName>
        <fullName evidence="1">Exodeoxyribonuclease VII large subunit</fullName>
        <shortName evidence="1">Exonuclease VII large subunit</shortName>
    </alternativeName>
</protein>
<feature type="chain" id="PRO_1000205685" description="Exodeoxyribonuclease 7 large subunit">
    <location>
        <begin position="1"/>
        <end position="448"/>
    </location>
</feature>
<evidence type="ECO:0000255" key="1">
    <source>
        <dbReference type="HAMAP-Rule" id="MF_00378"/>
    </source>
</evidence>
<reference key="1">
    <citation type="submission" date="2009-05" db="EMBL/GenBank/DDBJ databases">
        <title>Complete sequence of Tolumonas auensis DSM 9187.</title>
        <authorList>
            <consortium name="US DOE Joint Genome Institute"/>
            <person name="Lucas S."/>
            <person name="Copeland A."/>
            <person name="Lapidus A."/>
            <person name="Glavina del Rio T."/>
            <person name="Tice H."/>
            <person name="Bruce D."/>
            <person name="Goodwin L."/>
            <person name="Pitluck S."/>
            <person name="Chertkov O."/>
            <person name="Brettin T."/>
            <person name="Detter J.C."/>
            <person name="Han C."/>
            <person name="Larimer F."/>
            <person name="Land M."/>
            <person name="Hauser L."/>
            <person name="Kyrpides N."/>
            <person name="Mikhailova N."/>
            <person name="Spring S."/>
            <person name="Beller H."/>
        </authorList>
    </citation>
    <scope>NUCLEOTIDE SEQUENCE [LARGE SCALE GENOMIC DNA]</scope>
    <source>
        <strain>DSM 9187 / NBRC 110442 / TA 4</strain>
    </source>
</reference>
<keyword id="KW-0963">Cytoplasm</keyword>
<keyword id="KW-0269">Exonuclease</keyword>
<keyword id="KW-0378">Hydrolase</keyword>
<keyword id="KW-0540">Nuclease</keyword>
<keyword id="KW-1185">Reference proteome</keyword>
<organism>
    <name type="scientific">Tolumonas auensis (strain DSM 9187 / NBRC 110442 / TA 4)</name>
    <dbReference type="NCBI Taxonomy" id="595494"/>
    <lineage>
        <taxon>Bacteria</taxon>
        <taxon>Pseudomonadati</taxon>
        <taxon>Pseudomonadota</taxon>
        <taxon>Gammaproteobacteria</taxon>
        <taxon>Aeromonadales</taxon>
        <taxon>Aeromonadaceae</taxon>
        <taxon>Tolumonas</taxon>
    </lineage>
</organism>
<comment type="function">
    <text evidence="1">Bidirectionally degrades single-stranded DNA into large acid-insoluble oligonucleotides, which are then degraded further into small acid-soluble oligonucleotides.</text>
</comment>
<comment type="catalytic activity">
    <reaction evidence="1">
        <text>Exonucleolytic cleavage in either 5'- to 3'- or 3'- to 5'-direction to yield nucleoside 5'-phosphates.</text>
        <dbReference type="EC" id="3.1.11.6"/>
    </reaction>
</comment>
<comment type="subunit">
    <text evidence="1">Heterooligomer composed of large and small subunits.</text>
</comment>
<comment type="subcellular location">
    <subcellularLocation>
        <location evidence="1">Cytoplasm</location>
    </subcellularLocation>
</comment>
<comment type="similarity">
    <text evidence="1">Belongs to the XseA family.</text>
</comment>